<evidence type="ECO:0000255" key="1">
    <source>
        <dbReference type="HAMAP-Rule" id="MF_00226"/>
    </source>
</evidence>
<sequence length="433" mass="44755">MRAELLAVGDELLYGDIVNGNAAWLGRQLADVGVTVTTSTVVGDDIDMIATAIRVALDRADVVIMTGGLGPTQDDLTREGIAAAAGVGLRRDDFLESMLRRRFRDMGRGDGGRRVPQMNYRQADLPEGAQPLPNGTGTAPGIRMEIGTGVVYAMPGVPFEMNGMFTASVLPDILRRAGQPAVVVHRVLRTAGMWESAVAEALADEVDRLARIGNPRIAFLASGGQTRVRITARARDRAEAEMLIAPVETAARTALGAGVYGGADDSLEGVVLGLLVQRSATLAVAESITGGLLAGRLTDVPGASAAFRGGIVSYATEVKASALGVDEGLLAAEGAVSSRTAAAMAAGVRSRLGATYGLATTGVAGPQPQEDKPVGTLHIGLAGPDGTVTRSVRLPGDRPRIRTYAVVSALDLVRRMLAGLPNSEMTTTGDGAP</sequence>
<protein>
    <recommendedName>
        <fullName evidence="1">CinA-like protein</fullName>
    </recommendedName>
</protein>
<name>CINAL_FRACC</name>
<proteinExistence type="inferred from homology"/>
<accession>Q2J752</accession>
<organism>
    <name type="scientific">Frankia casuarinae (strain DSM 45818 / CECT 9043 / HFP020203 / CcI3)</name>
    <dbReference type="NCBI Taxonomy" id="106370"/>
    <lineage>
        <taxon>Bacteria</taxon>
        <taxon>Bacillati</taxon>
        <taxon>Actinomycetota</taxon>
        <taxon>Actinomycetes</taxon>
        <taxon>Frankiales</taxon>
        <taxon>Frankiaceae</taxon>
        <taxon>Frankia</taxon>
    </lineage>
</organism>
<dbReference type="EMBL" id="CP000249">
    <property type="protein sequence ID" value="ABD12890.1"/>
    <property type="molecule type" value="Genomic_DNA"/>
</dbReference>
<dbReference type="RefSeq" id="WP_011437914.1">
    <property type="nucleotide sequence ID" value="NZ_JENI01000092.1"/>
</dbReference>
<dbReference type="SMR" id="Q2J752"/>
<dbReference type="STRING" id="106370.Francci3_3538"/>
<dbReference type="KEGG" id="fra:Francci3_3538"/>
<dbReference type="eggNOG" id="COG1058">
    <property type="taxonomic scope" value="Bacteria"/>
</dbReference>
<dbReference type="eggNOG" id="COG1546">
    <property type="taxonomic scope" value="Bacteria"/>
</dbReference>
<dbReference type="HOGENOM" id="CLU_030805_9_3_11"/>
<dbReference type="OrthoDB" id="1253990at2"/>
<dbReference type="PhylomeDB" id="Q2J752"/>
<dbReference type="Proteomes" id="UP000001937">
    <property type="component" value="Chromosome"/>
</dbReference>
<dbReference type="CDD" id="cd00885">
    <property type="entry name" value="cinA"/>
    <property type="match status" value="1"/>
</dbReference>
<dbReference type="Gene3D" id="3.30.70.2860">
    <property type="match status" value="1"/>
</dbReference>
<dbReference type="Gene3D" id="3.90.950.20">
    <property type="entry name" value="CinA-like"/>
    <property type="match status" value="1"/>
</dbReference>
<dbReference type="Gene3D" id="3.40.980.10">
    <property type="entry name" value="MoaB/Mog-like domain"/>
    <property type="match status" value="1"/>
</dbReference>
<dbReference type="HAMAP" id="MF_00226_B">
    <property type="entry name" value="CinA_B"/>
    <property type="match status" value="1"/>
</dbReference>
<dbReference type="InterPro" id="IPR050101">
    <property type="entry name" value="CinA"/>
</dbReference>
<dbReference type="InterPro" id="IPR036653">
    <property type="entry name" value="CinA-like_C"/>
</dbReference>
<dbReference type="InterPro" id="IPR008136">
    <property type="entry name" value="CinA_C"/>
</dbReference>
<dbReference type="InterPro" id="IPR041424">
    <property type="entry name" value="CinA_KH"/>
</dbReference>
<dbReference type="InterPro" id="IPR008135">
    <property type="entry name" value="Competence-induced_CinA"/>
</dbReference>
<dbReference type="InterPro" id="IPR036425">
    <property type="entry name" value="MoaB/Mog-like_dom_sf"/>
</dbReference>
<dbReference type="InterPro" id="IPR001453">
    <property type="entry name" value="MoaB/Mog_dom"/>
</dbReference>
<dbReference type="NCBIfam" id="TIGR00200">
    <property type="entry name" value="cinA_nterm"/>
    <property type="match status" value="1"/>
</dbReference>
<dbReference type="NCBIfam" id="TIGR00199">
    <property type="entry name" value="PncC_domain"/>
    <property type="match status" value="1"/>
</dbReference>
<dbReference type="NCBIfam" id="NF001813">
    <property type="entry name" value="PRK00549.1"/>
    <property type="match status" value="1"/>
</dbReference>
<dbReference type="PANTHER" id="PTHR13939">
    <property type="entry name" value="NICOTINAMIDE-NUCLEOTIDE AMIDOHYDROLASE PNCC"/>
    <property type="match status" value="1"/>
</dbReference>
<dbReference type="PANTHER" id="PTHR13939:SF0">
    <property type="entry name" value="NMN AMIDOHYDROLASE-LIKE PROTEIN YFAY"/>
    <property type="match status" value="1"/>
</dbReference>
<dbReference type="Pfam" id="PF02464">
    <property type="entry name" value="CinA"/>
    <property type="match status" value="1"/>
</dbReference>
<dbReference type="Pfam" id="PF18146">
    <property type="entry name" value="CinA_KH"/>
    <property type="match status" value="1"/>
</dbReference>
<dbReference type="Pfam" id="PF00994">
    <property type="entry name" value="MoCF_biosynth"/>
    <property type="match status" value="1"/>
</dbReference>
<dbReference type="PIRSF" id="PIRSF006728">
    <property type="entry name" value="CinA"/>
    <property type="match status" value="1"/>
</dbReference>
<dbReference type="SMART" id="SM00852">
    <property type="entry name" value="MoCF_biosynth"/>
    <property type="match status" value="1"/>
</dbReference>
<dbReference type="SUPFAM" id="SSF142433">
    <property type="entry name" value="CinA-like"/>
    <property type="match status" value="1"/>
</dbReference>
<dbReference type="SUPFAM" id="SSF53218">
    <property type="entry name" value="Molybdenum cofactor biosynthesis proteins"/>
    <property type="match status" value="1"/>
</dbReference>
<gene>
    <name type="ordered locus">Francci3_3538</name>
</gene>
<comment type="similarity">
    <text evidence="1">Belongs to the CinA family.</text>
</comment>
<reference key="1">
    <citation type="journal article" date="2007" name="Genome Res.">
        <title>Genome characteristics of facultatively symbiotic Frankia sp. strains reflect host range and host plant biogeography.</title>
        <authorList>
            <person name="Normand P."/>
            <person name="Lapierre P."/>
            <person name="Tisa L.S."/>
            <person name="Gogarten J.P."/>
            <person name="Alloisio N."/>
            <person name="Bagnarol E."/>
            <person name="Bassi C.A."/>
            <person name="Berry A.M."/>
            <person name="Bickhart D.M."/>
            <person name="Choisne N."/>
            <person name="Couloux A."/>
            <person name="Cournoyer B."/>
            <person name="Cruveiller S."/>
            <person name="Daubin V."/>
            <person name="Demange N."/>
            <person name="Francino M.P."/>
            <person name="Goltsman E."/>
            <person name="Huang Y."/>
            <person name="Kopp O.R."/>
            <person name="Labarre L."/>
            <person name="Lapidus A."/>
            <person name="Lavire C."/>
            <person name="Marechal J."/>
            <person name="Martinez M."/>
            <person name="Mastronunzio J.E."/>
            <person name="Mullin B.C."/>
            <person name="Niemann J."/>
            <person name="Pujic P."/>
            <person name="Rawnsley T."/>
            <person name="Rouy Z."/>
            <person name="Schenowitz C."/>
            <person name="Sellstedt A."/>
            <person name="Tavares F."/>
            <person name="Tomkins J.P."/>
            <person name="Vallenet D."/>
            <person name="Valverde C."/>
            <person name="Wall L.G."/>
            <person name="Wang Y."/>
            <person name="Medigue C."/>
            <person name="Benson D.R."/>
        </authorList>
    </citation>
    <scope>NUCLEOTIDE SEQUENCE [LARGE SCALE GENOMIC DNA]</scope>
    <source>
        <strain>DSM 45818 / CECT 9043 / HFP020203 / CcI3</strain>
    </source>
</reference>
<keyword id="KW-1185">Reference proteome</keyword>
<feature type="chain" id="PRO_1000058708" description="CinA-like protein">
    <location>
        <begin position="1"/>
        <end position="433"/>
    </location>
</feature>